<feature type="chain" id="PRO_0000153901" description="Adenylate kinase isoenzyme 6 homolog HBR1">
    <location>
        <begin position="1"/>
        <end position="248"/>
    </location>
</feature>
<feature type="region of interest" description="NMPbind" evidence="1">
    <location>
        <begin position="49"/>
        <end position="72"/>
    </location>
</feature>
<feature type="region of interest" description="LID" evidence="1">
    <location>
        <begin position="124"/>
        <end position="134"/>
    </location>
</feature>
<feature type="region of interest" description="Disordered" evidence="2">
    <location>
        <begin position="188"/>
        <end position="248"/>
    </location>
</feature>
<feature type="compositionally biased region" description="Acidic residues" evidence="2">
    <location>
        <begin position="202"/>
        <end position="238"/>
    </location>
</feature>
<feature type="compositionally biased region" description="Basic and acidic residues" evidence="2">
    <location>
        <begin position="239"/>
        <end position="248"/>
    </location>
</feature>
<feature type="binding site" evidence="1">
    <location>
        <position position="19"/>
    </location>
    <ligand>
        <name>ATP</name>
        <dbReference type="ChEBI" id="CHEBI:30616"/>
    </ligand>
</feature>
<feature type="binding site" evidence="1">
    <location>
        <position position="21"/>
    </location>
    <ligand>
        <name>ATP</name>
        <dbReference type="ChEBI" id="CHEBI:30616"/>
    </ligand>
</feature>
<feature type="binding site" evidence="1">
    <location>
        <position position="22"/>
    </location>
    <ligand>
        <name>ATP</name>
        <dbReference type="ChEBI" id="CHEBI:30616"/>
    </ligand>
</feature>
<feature type="binding site" evidence="1">
    <location>
        <position position="23"/>
    </location>
    <ligand>
        <name>ATP</name>
        <dbReference type="ChEBI" id="CHEBI:30616"/>
    </ligand>
</feature>
<feature type="binding site" evidence="1">
    <location>
        <position position="24"/>
    </location>
    <ligand>
        <name>ATP</name>
        <dbReference type="ChEBI" id="CHEBI:30616"/>
    </ligand>
</feature>
<feature type="binding site" evidence="1">
    <location>
        <position position="125"/>
    </location>
    <ligand>
        <name>ATP</name>
        <dbReference type="ChEBI" id="CHEBI:30616"/>
    </ligand>
</feature>
<proteinExistence type="evidence at transcript level"/>
<organism>
    <name type="scientific">Candida albicans (strain SC5314 / ATCC MYA-2876)</name>
    <name type="common">Yeast</name>
    <dbReference type="NCBI Taxonomy" id="237561"/>
    <lineage>
        <taxon>Eukaryota</taxon>
        <taxon>Fungi</taxon>
        <taxon>Dikarya</taxon>
        <taxon>Ascomycota</taxon>
        <taxon>Saccharomycotina</taxon>
        <taxon>Pichiomycetes</taxon>
        <taxon>Debaryomycetaceae</taxon>
        <taxon>Candida/Lodderomyces clade</taxon>
        <taxon>Candida</taxon>
    </lineage>
</organism>
<keyword id="KW-0067">ATP-binding</keyword>
<keyword id="KW-0963">Cytoplasm</keyword>
<keyword id="KW-0418">Kinase</keyword>
<keyword id="KW-0547">Nucleotide-binding</keyword>
<keyword id="KW-0539">Nucleus</keyword>
<keyword id="KW-1185">Reference proteome</keyword>
<keyword id="KW-0690">Ribosome biogenesis</keyword>
<keyword id="KW-0698">rRNA processing</keyword>
<keyword id="KW-0808">Transferase</keyword>
<name>KAD6_CANAL</name>
<dbReference type="EC" id="2.7.4.3" evidence="1"/>
<dbReference type="EMBL" id="AF466197">
    <property type="protein sequence ID" value="AAM10638.1"/>
    <property type="molecule type" value="Genomic_DNA"/>
</dbReference>
<dbReference type="EMBL" id="CP017623">
    <property type="protein sequence ID" value="AOW25732.1"/>
    <property type="molecule type" value="Genomic_DNA"/>
</dbReference>
<dbReference type="RefSeq" id="XP_719036.1">
    <property type="nucleotide sequence ID" value="XM_713943.1"/>
</dbReference>
<dbReference type="SMR" id="Q8TG40"/>
<dbReference type="FunCoup" id="Q8TG40">
    <property type="interactions" value="883"/>
</dbReference>
<dbReference type="STRING" id="237561.Q8TG40"/>
<dbReference type="EnsemblFungi" id="C1_00340W_A-T">
    <property type="protein sequence ID" value="C1_00340W_A-T-p1"/>
    <property type="gene ID" value="C1_00340W_A"/>
</dbReference>
<dbReference type="GeneID" id="3639295"/>
<dbReference type="KEGG" id="cal:CAALFM_C100340WA"/>
<dbReference type="CGD" id="CAL0000197369">
    <property type="gene designation" value="HBR1"/>
</dbReference>
<dbReference type="VEuPathDB" id="FungiDB:C1_00340W_A"/>
<dbReference type="eggNOG" id="KOG3347">
    <property type="taxonomic scope" value="Eukaryota"/>
</dbReference>
<dbReference type="HOGENOM" id="CLU_079096_3_0_1"/>
<dbReference type="InParanoid" id="Q8TG40"/>
<dbReference type="OMA" id="QCEIFGT"/>
<dbReference type="OrthoDB" id="10251185at2759"/>
<dbReference type="PHI-base" id="PHI:4925"/>
<dbReference type="PRO" id="PR:Q8TG40"/>
<dbReference type="Proteomes" id="UP000000559">
    <property type="component" value="Chromosome 1"/>
</dbReference>
<dbReference type="GO" id="GO:0005737">
    <property type="term" value="C:cytoplasm"/>
    <property type="evidence" value="ECO:0000318"/>
    <property type="project" value="GO_Central"/>
</dbReference>
<dbReference type="GO" id="GO:0005634">
    <property type="term" value="C:nucleus"/>
    <property type="evidence" value="ECO:0000318"/>
    <property type="project" value="GO_Central"/>
</dbReference>
<dbReference type="GO" id="GO:0004017">
    <property type="term" value="F:adenylate kinase activity"/>
    <property type="evidence" value="ECO:0000318"/>
    <property type="project" value="GO_Central"/>
</dbReference>
<dbReference type="GO" id="GO:0005524">
    <property type="term" value="F:ATP binding"/>
    <property type="evidence" value="ECO:0000314"/>
    <property type="project" value="CGD"/>
</dbReference>
<dbReference type="GO" id="GO:0016887">
    <property type="term" value="F:ATP hydrolysis activity"/>
    <property type="evidence" value="ECO:0007669"/>
    <property type="project" value="UniProtKB-UniRule"/>
</dbReference>
<dbReference type="GO" id="GO:0034599">
    <property type="term" value="P:cellular response to oxidative stress"/>
    <property type="evidence" value="ECO:0007669"/>
    <property type="project" value="EnsemblFungi"/>
</dbReference>
<dbReference type="GO" id="GO:0000462">
    <property type="term" value="P:maturation of SSU-rRNA from tricistronic rRNA transcript (SSU-rRNA, 5.8S rRNA, LSU-rRNA)"/>
    <property type="evidence" value="ECO:0007669"/>
    <property type="project" value="EnsemblFungi"/>
</dbReference>
<dbReference type="GO" id="GO:0036166">
    <property type="term" value="P:phenotypic switching"/>
    <property type="evidence" value="ECO:0000315"/>
    <property type="project" value="CGD"/>
</dbReference>
<dbReference type="GO" id="GO:0010468">
    <property type="term" value="P:regulation of gene expression"/>
    <property type="evidence" value="ECO:0000315"/>
    <property type="project" value="CGD"/>
</dbReference>
<dbReference type="FunFam" id="3.40.50.300:FF:000372">
    <property type="entry name" value="Adenylate kinase isoenzyme 6 homolog"/>
    <property type="match status" value="1"/>
</dbReference>
<dbReference type="Gene3D" id="3.40.50.300">
    <property type="entry name" value="P-loop containing nucleotide triphosphate hydrolases"/>
    <property type="match status" value="1"/>
</dbReference>
<dbReference type="HAMAP" id="MF_00039">
    <property type="entry name" value="Adenylate_kinase_AK6"/>
    <property type="match status" value="1"/>
</dbReference>
<dbReference type="InterPro" id="IPR020618">
    <property type="entry name" value="Adenyl_kinase_AK6"/>
</dbReference>
<dbReference type="InterPro" id="IPR027417">
    <property type="entry name" value="P-loop_NTPase"/>
</dbReference>
<dbReference type="PANTHER" id="PTHR12595:SF0">
    <property type="entry name" value="ADENYLATE KINASE ISOENZYME 6"/>
    <property type="match status" value="1"/>
</dbReference>
<dbReference type="PANTHER" id="PTHR12595">
    <property type="entry name" value="POS9-ACTIVATING FACTOR FAP7-RELATED"/>
    <property type="match status" value="1"/>
</dbReference>
<dbReference type="Pfam" id="PF13238">
    <property type="entry name" value="AAA_18"/>
    <property type="match status" value="1"/>
</dbReference>
<dbReference type="SUPFAM" id="SSF52540">
    <property type="entry name" value="P-loop containing nucleoside triphosphate hydrolases"/>
    <property type="match status" value="1"/>
</dbReference>
<sequence>MTTMSRRYTPNIIITGTPGCGKSSHSSSLVSQLNQTLGKETTIHFKHFNISEIAKERDCIESYDAKLDTSIVDEDKLLDSLEPDLEKGGVVVDWHCCDIFPERLIDLVVVLRTDNSNLFDRLKTRNYNDLKLQENLDCEIMEVILQEAKDSYIPDIVIELRSDTAEEMDENVDRISSWVETWIEDHPDGVSNELNKQYNPDDSSDEGDDNSDSDEYELEEDEQEEEEEREEYDEETNEEMEHTEDIAQ</sequence>
<protein>
    <recommendedName>
        <fullName evidence="1">Adenylate kinase isoenzyme 6 homolog HBR1</fullName>
        <shortName evidence="1">AK6</shortName>
        <ecNumber evidence="1">2.7.4.3</ecNumber>
    </recommendedName>
    <alternativeName>
        <fullName evidence="1">Dual activity adenylate kinase/ATPase</fullName>
        <shortName evidence="1">AK/ATPase</shortName>
    </alternativeName>
    <alternativeName>
        <fullName>Hemoglobin and proliferation-regulated protein 1</fullName>
        <shortName>Hb-regulated protein 1</shortName>
    </alternativeName>
</protein>
<gene>
    <name type="primary">HBR1</name>
    <name type="synonym">FAP7</name>
    <name type="ordered locus">CAALFM_C100340WA</name>
    <name type="ORF">CaO19.13495</name>
    <name type="ORF">CaO19.6074</name>
</gene>
<reference key="1">
    <citation type="journal article" date="2004" name="Eukaryot. Cell">
        <title>Hemoglobin regulates expression of an activator of mating-type locus alpha genes in Candida albicans.</title>
        <authorList>
            <person name="Pendrak M.L."/>
            <person name="Yan S.S."/>
            <person name="Roberts D.D."/>
        </authorList>
    </citation>
    <scope>NUCLEOTIDE SEQUENCE [GENOMIC DNA]</scope>
    <scope>FUNCTION</scope>
    <scope>INDUCTION</scope>
</reference>
<reference key="2">
    <citation type="journal article" date="2004" name="Proc. Natl. Acad. Sci. U.S.A.">
        <title>The diploid genome sequence of Candida albicans.</title>
        <authorList>
            <person name="Jones T."/>
            <person name="Federspiel N.A."/>
            <person name="Chibana H."/>
            <person name="Dungan J."/>
            <person name="Kalman S."/>
            <person name="Magee B.B."/>
            <person name="Newport G."/>
            <person name="Thorstenson Y.R."/>
            <person name="Agabian N."/>
            <person name="Magee P.T."/>
            <person name="Davis R.W."/>
            <person name="Scherer S."/>
        </authorList>
    </citation>
    <scope>NUCLEOTIDE SEQUENCE [LARGE SCALE GENOMIC DNA]</scope>
    <source>
        <strain>SC5314 / ATCC MYA-2876</strain>
    </source>
</reference>
<reference key="3">
    <citation type="journal article" date="2007" name="Genome Biol.">
        <title>Assembly of the Candida albicans genome into sixteen supercontigs aligned on the eight chromosomes.</title>
        <authorList>
            <person name="van het Hoog M."/>
            <person name="Rast T.J."/>
            <person name="Martchenko M."/>
            <person name="Grindle S."/>
            <person name="Dignard D."/>
            <person name="Hogues H."/>
            <person name="Cuomo C."/>
            <person name="Berriman M."/>
            <person name="Scherer S."/>
            <person name="Magee B.B."/>
            <person name="Whiteway M."/>
            <person name="Chibana H."/>
            <person name="Nantel A."/>
            <person name="Magee P.T."/>
        </authorList>
    </citation>
    <scope>GENOME REANNOTATION</scope>
    <source>
        <strain>SC5314 / ATCC MYA-2876</strain>
    </source>
</reference>
<reference key="4">
    <citation type="journal article" date="2013" name="Genome Biol.">
        <title>Assembly of a phased diploid Candida albicans genome facilitates allele-specific measurements and provides a simple model for repeat and indel structure.</title>
        <authorList>
            <person name="Muzzey D."/>
            <person name="Schwartz K."/>
            <person name="Weissman J.S."/>
            <person name="Sherlock G."/>
        </authorList>
    </citation>
    <scope>NUCLEOTIDE SEQUENCE [LARGE SCALE GENOMIC DNA]</scope>
    <scope>GENOME REANNOTATION</scope>
    <source>
        <strain>SC5314 / ATCC MYA-2876</strain>
    </source>
</reference>
<reference key="5">
    <citation type="journal article" date="2007" name="Med. Mycol.">
        <title>Induction of a high affinity fibronectin receptor in Candida albicans by caspofungin: requirements for beta (1,6) glucans and the developmental regulator Hbr1p.</title>
        <authorList>
            <person name="Pendrak M.L."/>
            <person name="Rodrigues R.G."/>
            <person name="Roberts D.D."/>
        </authorList>
    </citation>
    <scope>FUNCTION</scope>
</reference>
<reference key="6">
    <citation type="journal article" date="2007" name="Mol. Microbiol.">
        <title>Deletion of the high-affinity cAMP phosphodiesterase encoded by PDE2 affects stress responses and virulence in Candida albicans.</title>
        <authorList>
            <person name="Wilson D."/>
            <person name="Tutulan-Cunita A."/>
            <person name="Jung W."/>
            <person name="Hauser N.C."/>
            <person name="Hernandez R."/>
            <person name="Williamson T."/>
            <person name="Piekarska K."/>
            <person name="Rupp S."/>
            <person name="Young T."/>
            <person name="Stateva L."/>
        </authorList>
    </citation>
    <scope>INDUCTION</scope>
</reference>
<accession>Q8TG40</accession>
<accession>A0A1D8PC69</accession>
<accession>Q5AB96</accession>
<comment type="function">
    <text evidence="1 3 4">Broad-specificity nucleoside monophosphate (NMP) kinase that catalyzes the reversible transfer of the terminal phosphate group between nucleoside triphosphates and monophosphates. Also has ATPase activity. Involved in the late cytoplasmic maturation steps of the 40S ribosomal particles, specifically 18S rRNA maturation. While NMP activity is not required for ribosome maturation, ATPase activity is. Associates transiently with small ribosomal subunit protein uS11. ATP hydrolysis breaks the interaction with uS11. May temporarily remove uS11 from the ribosome to enable a conformational change of the ribosomal RNA that is needed for the final maturation step of the small ribosomal subunit. Its NMP activity may have a role in nuclear energy homeostasis (By similarity). Induces transcription of mating-type proteins ALPHA1 and ALPHA2 and moderately represses transcription of mating-type protein A1 in response to hemoglobin and growth signals. Involved in the induction of a high affinity fibronectin receptor by sub-inhibitory dosages of caspofungin (PubMed:15189997, PubMed:17365652).</text>
</comment>
<comment type="catalytic activity">
    <reaction evidence="1">
        <text>AMP + ATP = 2 ADP</text>
        <dbReference type="Rhea" id="RHEA:12973"/>
        <dbReference type="ChEBI" id="CHEBI:30616"/>
        <dbReference type="ChEBI" id="CHEBI:456215"/>
        <dbReference type="ChEBI" id="CHEBI:456216"/>
        <dbReference type="EC" id="2.7.4.3"/>
    </reaction>
</comment>
<comment type="catalytic activity">
    <reaction evidence="1">
        <text>ATP + H2O = ADP + phosphate + H(+)</text>
        <dbReference type="Rhea" id="RHEA:13065"/>
        <dbReference type="ChEBI" id="CHEBI:15377"/>
        <dbReference type="ChEBI" id="CHEBI:15378"/>
        <dbReference type="ChEBI" id="CHEBI:30616"/>
        <dbReference type="ChEBI" id="CHEBI:43474"/>
        <dbReference type="ChEBI" id="CHEBI:456216"/>
    </reaction>
</comment>
<comment type="subunit">
    <text evidence="1">Interacts with small ribosomal subunit protein uS11. Not a structural component of 43S pre-ribosomes, but transiently interacts with them by binding to uS11.</text>
</comment>
<comment type="subcellular location">
    <subcellularLocation>
        <location evidence="1">Cytoplasm</location>
    </subcellularLocation>
    <subcellularLocation>
        <location evidence="1">Nucleus</location>
    </subcellularLocation>
</comment>
<comment type="induction">
    <text evidence="3 5">Induced in the presence of exogenous hemoglobin and during the exponential growth phase and by cold-stress.</text>
</comment>
<comment type="similarity">
    <text evidence="1">Belongs to the adenylate kinase family. AK6 subfamily.</text>
</comment>
<evidence type="ECO:0000255" key="1">
    <source>
        <dbReference type="HAMAP-Rule" id="MF_03173"/>
    </source>
</evidence>
<evidence type="ECO:0000256" key="2">
    <source>
        <dbReference type="SAM" id="MobiDB-lite"/>
    </source>
</evidence>
<evidence type="ECO:0000269" key="3">
    <source>
    </source>
</evidence>
<evidence type="ECO:0000269" key="4">
    <source>
    </source>
</evidence>
<evidence type="ECO:0000269" key="5">
    <source>
    </source>
</evidence>